<name>YCCJ_ECOLI</name>
<organism>
    <name type="scientific">Escherichia coli (strain K12)</name>
    <dbReference type="NCBI Taxonomy" id="83333"/>
    <lineage>
        <taxon>Bacteria</taxon>
        <taxon>Pseudomonadati</taxon>
        <taxon>Pseudomonadota</taxon>
        <taxon>Gammaproteobacteria</taxon>
        <taxon>Enterobacterales</taxon>
        <taxon>Enterobacteriaceae</taxon>
        <taxon>Escherichia</taxon>
    </lineage>
</organism>
<accession>P0AB14</accession>
<accession>P46131</accession>
<reference key="1">
    <citation type="journal article" date="1990" name="J. Bacteriol.">
        <title>Nucleotide sequence and transcriptional analysis of the Escherichia coli agp gene encoding periplasmic acid glucose-1-phosphatase.</title>
        <authorList>
            <person name="Pradel E."/>
            <person name="Marck C."/>
            <person name="Boquet P.L."/>
        </authorList>
    </citation>
    <scope>NUCLEOTIDE SEQUENCE [GENOMIC DNA]</scope>
    <source>
        <strain>K12</strain>
    </source>
</reference>
<reference key="2">
    <citation type="journal article" date="1996" name="DNA Res.">
        <title>A 718-kb DNA sequence of the Escherichia coli K-12 genome corresponding to the 12.7-28.0 min region on the linkage map.</title>
        <authorList>
            <person name="Oshima T."/>
            <person name="Aiba H."/>
            <person name="Baba T."/>
            <person name="Fujita K."/>
            <person name="Hayashi K."/>
            <person name="Honjo A."/>
            <person name="Ikemoto K."/>
            <person name="Inada T."/>
            <person name="Itoh T."/>
            <person name="Kajihara M."/>
            <person name="Kanai K."/>
            <person name="Kashimoto K."/>
            <person name="Kimura S."/>
            <person name="Kitagawa M."/>
            <person name="Makino K."/>
            <person name="Masuda S."/>
            <person name="Miki T."/>
            <person name="Mizobuchi K."/>
            <person name="Mori H."/>
            <person name="Motomura K."/>
            <person name="Nakamura Y."/>
            <person name="Nashimoto H."/>
            <person name="Nishio Y."/>
            <person name="Saito N."/>
            <person name="Sampei G."/>
            <person name="Seki Y."/>
            <person name="Tagami H."/>
            <person name="Takemoto K."/>
            <person name="Wada C."/>
            <person name="Yamamoto Y."/>
            <person name="Yano M."/>
            <person name="Horiuchi T."/>
        </authorList>
    </citation>
    <scope>NUCLEOTIDE SEQUENCE [LARGE SCALE GENOMIC DNA]</scope>
    <source>
        <strain>K12 / W3110 / ATCC 27325 / DSM 5911</strain>
    </source>
</reference>
<reference key="3">
    <citation type="journal article" date="1997" name="Science">
        <title>The complete genome sequence of Escherichia coli K-12.</title>
        <authorList>
            <person name="Blattner F.R."/>
            <person name="Plunkett G. III"/>
            <person name="Bloch C.A."/>
            <person name="Perna N.T."/>
            <person name="Burland V."/>
            <person name="Riley M."/>
            <person name="Collado-Vides J."/>
            <person name="Glasner J.D."/>
            <person name="Rode C.K."/>
            <person name="Mayhew G.F."/>
            <person name="Gregor J."/>
            <person name="Davis N.W."/>
            <person name="Kirkpatrick H.A."/>
            <person name="Goeden M.A."/>
            <person name="Rose D.J."/>
            <person name="Mau B."/>
            <person name="Shao Y."/>
        </authorList>
    </citation>
    <scope>NUCLEOTIDE SEQUENCE [LARGE SCALE GENOMIC DNA]</scope>
    <source>
        <strain>K12 / MG1655 / ATCC 47076</strain>
    </source>
</reference>
<reference key="4">
    <citation type="journal article" date="2006" name="Mol. Syst. Biol.">
        <title>Highly accurate genome sequences of Escherichia coli K-12 strains MG1655 and W3110.</title>
        <authorList>
            <person name="Hayashi K."/>
            <person name="Morooka N."/>
            <person name="Yamamoto Y."/>
            <person name="Fujita K."/>
            <person name="Isono K."/>
            <person name="Choi S."/>
            <person name="Ohtsubo E."/>
            <person name="Baba T."/>
            <person name="Wanner B.L."/>
            <person name="Mori H."/>
            <person name="Horiuchi T."/>
        </authorList>
    </citation>
    <scope>NUCLEOTIDE SEQUENCE [LARGE SCALE GENOMIC DNA]</scope>
    <source>
        <strain>K12 / W3110 / ATCC 27325 / DSM 5911</strain>
    </source>
</reference>
<reference key="5">
    <citation type="journal article" date="1998" name="FEMS Microbiol. Lett.">
        <title>Small genes/gene-products in Escherichia coli K-12.</title>
        <authorList>
            <person name="Wasinger V.C."/>
            <person name="Humphery-Smith I."/>
        </authorList>
    </citation>
    <scope>PROTEIN SEQUENCE OF 2-11</scope>
    <source>
        <strain>K12</strain>
    </source>
</reference>
<reference key="6">
    <citation type="journal article" date="1995" name="Nucleic Acids Res.">
        <title>Detection of new genes in a bacterial genome using Markov models for three gene classes.</title>
        <authorList>
            <person name="Borodovsky M."/>
            <person name="McIninch J."/>
            <person name="Koonin E.V."/>
            <person name="Rudd K.E."/>
            <person name="Medigue C."/>
            <person name="Danchin A."/>
        </authorList>
    </citation>
    <scope>IDENTIFICATION</scope>
</reference>
<evidence type="ECO:0000269" key="1">
    <source>
    </source>
</evidence>
<dbReference type="EMBL" id="M33807">
    <property type="status" value="NOT_ANNOTATED_CDS"/>
    <property type="molecule type" value="Genomic_DNA"/>
</dbReference>
<dbReference type="EMBL" id="U00096">
    <property type="protein sequence ID" value="AAC74088.1"/>
    <property type="molecule type" value="Genomic_DNA"/>
</dbReference>
<dbReference type="EMBL" id="AP009048">
    <property type="protein sequence ID" value="BAA35770.1"/>
    <property type="molecule type" value="Genomic_DNA"/>
</dbReference>
<dbReference type="PIR" id="A64842">
    <property type="entry name" value="A64842"/>
</dbReference>
<dbReference type="RefSeq" id="NP_415523.1">
    <property type="nucleotide sequence ID" value="NC_000913.3"/>
</dbReference>
<dbReference type="RefSeq" id="WP_001143120.1">
    <property type="nucleotide sequence ID" value="NZ_STEB01000006.1"/>
</dbReference>
<dbReference type="BioGRID" id="4259552">
    <property type="interactions" value="25"/>
</dbReference>
<dbReference type="DIP" id="DIP-47912N"/>
<dbReference type="FunCoup" id="P0AB14">
    <property type="interactions" value="149"/>
</dbReference>
<dbReference type="IntAct" id="P0AB14">
    <property type="interactions" value="6"/>
</dbReference>
<dbReference type="STRING" id="511145.b1003"/>
<dbReference type="jPOST" id="P0AB14"/>
<dbReference type="PaxDb" id="511145-b1003"/>
<dbReference type="EnsemblBacteria" id="AAC74088">
    <property type="protein sequence ID" value="AAC74088"/>
    <property type="gene ID" value="b1003"/>
</dbReference>
<dbReference type="GeneID" id="948930"/>
<dbReference type="KEGG" id="ecj:JW0988"/>
<dbReference type="KEGG" id="eco:b1003"/>
<dbReference type="KEGG" id="ecoc:C3026_06105"/>
<dbReference type="PATRIC" id="fig|511145.12.peg.1039"/>
<dbReference type="EchoBASE" id="EB2565"/>
<dbReference type="eggNOG" id="ENOG5032RZ6">
    <property type="taxonomic scope" value="Bacteria"/>
</dbReference>
<dbReference type="HOGENOM" id="CLU_202423_0_0_6"/>
<dbReference type="InParanoid" id="P0AB14"/>
<dbReference type="OMA" id="LYWGEET"/>
<dbReference type="OrthoDB" id="6456234at2"/>
<dbReference type="PhylomeDB" id="P0AB14"/>
<dbReference type="BioCyc" id="EcoCyc:EG12703-MONOMER"/>
<dbReference type="PRO" id="PR:P0AB14"/>
<dbReference type="Proteomes" id="UP000000625">
    <property type="component" value="Chromosome"/>
</dbReference>
<dbReference type="GO" id="GO:0005829">
    <property type="term" value="C:cytosol"/>
    <property type="evidence" value="ECO:0000314"/>
    <property type="project" value="EcoCyc"/>
</dbReference>
<dbReference type="InterPro" id="IPR025600">
    <property type="entry name" value="YccJ"/>
</dbReference>
<dbReference type="NCBIfam" id="NF007554">
    <property type="entry name" value="PRK10174.1"/>
    <property type="match status" value="1"/>
</dbReference>
<dbReference type="Pfam" id="PF13993">
    <property type="entry name" value="YccJ"/>
    <property type="match status" value="1"/>
</dbReference>
<sequence>MPTQEAKAHHVGEWASLRNTSPEIAEAIFEVAGYDEKMAEKIWEEGSDEVLVKAFAKTDKDSLFWGEQTIERKNV</sequence>
<protein>
    <recommendedName>
        <fullName>Uncharacterized protein YccJ</fullName>
    </recommendedName>
</protein>
<proteinExistence type="evidence at protein level"/>
<keyword id="KW-0903">Direct protein sequencing</keyword>
<keyword id="KW-1185">Reference proteome</keyword>
<gene>
    <name type="primary">yccJ</name>
    <name type="ordered locus">b1003</name>
    <name type="ordered locus">JW0988</name>
</gene>
<feature type="initiator methionine" description="Removed" evidence="1">
    <location>
        <position position="1"/>
    </location>
</feature>
<feature type="chain" id="PRO_0000168785" description="Uncharacterized protein YccJ">
    <location>
        <begin position="2"/>
        <end position="75"/>
    </location>
</feature>